<accession>P0C492</accession>
<accession>P12148</accession>
<accession>Q6QY50</accession>
<accession>Q6Z508</accession>
<keyword id="KW-0150">Chloroplast</keyword>
<keyword id="KW-0934">Plastid</keyword>
<keyword id="KW-0687">Ribonucleoprotein</keyword>
<keyword id="KW-0689">Ribosomal protein</keyword>
<keyword id="KW-0694">RNA-binding</keyword>
<keyword id="KW-0699">rRNA-binding</keyword>
<gene>
    <name type="primary">rps8</name>
    <name type="ORF">PA107</name>
</gene>
<sequence>MGKDTIADLLTSIRNADMNKKGTVRVVSTNITENIVKILLREGFIESVRKHQESNRYFLVSTLRHQKRKTRKGIYRTRTFLKRISRPGLRIYANYQGIPKVLGGMGIAILSTSRGIMTDREARLNRIGGEVLCYIW</sequence>
<reference key="1">
    <citation type="journal article" date="2004" name="Plant Physiol.">
        <title>A comparison of rice chloroplast genomes.</title>
        <authorList>
            <person name="Tang J."/>
            <person name="Xia H."/>
            <person name="Cao M."/>
            <person name="Zhang X."/>
            <person name="Zeng W."/>
            <person name="Hu S."/>
            <person name="Tong W."/>
            <person name="Wang J."/>
            <person name="Wang J."/>
            <person name="Yu J."/>
            <person name="Yang H."/>
            <person name="Zhu L."/>
        </authorList>
    </citation>
    <scope>NUCLEOTIDE SEQUENCE [LARGE SCALE GENOMIC DNA]</scope>
    <source>
        <strain>cv. PA64s</strain>
    </source>
</reference>
<name>RR8_ORYSA</name>
<evidence type="ECO:0000250" key="1"/>
<evidence type="ECO:0000305" key="2"/>
<organism>
    <name type="scientific">Oryza sativa</name>
    <name type="common">Rice</name>
    <dbReference type="NCBI Taxonomy" id="4530"/>
    <lineage>
        <taxon>Eukaryota</taxon>
        <taxon>Viridiplantae</taxon>
        <taxon>Streptophyta</taxon>
        <taxon>Embryophyta</taxon>
        <taxon>Tracheophyta</taxon>
        <taxon>Spermatophyta</taxon>
        <taxon>Magnoliopsida</taxon>
        <taxon>Liliopsida</taxon>
        <taxon>Poales</taxon>
        <taxon>Poaceae</taxon>
        <taxon>BOP clade</taxon>
        <taxon>Oryzoideae</taxon>
        <taxon>Oryzeae</taxon>
        <taxon>Oryzinae</taxon>
        <taxon>Oryza</taxon>
    </lineage>
</organism>
<dbReference type="EMBL" id="AY522331">
    <property type="protein sequence ID" value="AAS46208.1"/>
    <property type="molecule type" value="Genomic_DNA"/>
</dbReference>
<dbReference type="RefSeq" id="NP_039421.1">
    <property type="nucleotide sequence ID" value="NC_001320.1"/>
</dbReference>
<dbReference type="RefSeq" id="YP_009305339.1">
    <property type="nucleotide sequence ID" value="NC_031333.1"/>
</dbReference>
<dbReference type="SMR" id="P0C492"/>
<dbReference type="GeneID" id="29141407"/>
<dbReference type="GeneID" id="3131446"/>
<dbReference type="KEGG" id="osa:3131446"/>
<dbReference type="GO" id="GO:0009507">
    <property type="term" value="C:chloroplast"/>
    <property type="evidence" value="ECO:0007669"/>
    <property type="project" value="UniProtKB-SubCell"/>
</dbReference>
<dbReference type="GO" id="GO:0009536">
    <property type="term" value="C:plastid"/>
    <property type="evidence" value="ECO:0000305"/>
    <property type="project" value="Gramene"/>
</dbReference>
<dbReference type="GO" id="GO:1990904">
    <property type="term" value="C:ribonucleoprotein complex"/>
    <property type="evidence" value="ECO:0007669"/>
    <property type="project" value="UniProtKB-KW"/>
</dbReference>
<dbReference type="GO" id="GO:0005840">
    <property type="term" value="C:ribosome"/>
    <property type="evidence" value="ECO:0007669"/>
    <property type="project" value="UniProtKB-KW"/>
</dbReference>
<dbReference type="GO" id="GO:0019843">
    <property type="term" value="F:rRNA binding"/>
    <property type="evidence" value="ECO:0007669"/>
    <property type="project" value="UniProtKB-UniRule"/>
</dbReference>
<dbReference type="GO" id="GO:0003735">
    <property type="term" value="F:structural constituent of ribosome"/>
    <property type="evidence" value="ECO:0007669"/>
    <property type="project" value="InterPro"/>
</dbReference>
<dbReference type="GO" id="GO:0006412">
    <property type="term" value="P:translation"/>
    <property type="evidence" value="ECO:0007669"/>
    <property type="project" value="UniProtKB-UniRule"/>
</dbReference>
<dbReference type="FunFam" id="3.30.1490.10:FF:000001">
    <property type="entry name" value="30S ribosomal protein S8"/>
    <property type="match status" value="1"/>
</dbReference>
<dbReference type="FunFam" id="3.30.1370.30:FF:000004">
    <property type="entry name" value="30S ribosomal protein S8, chloroplastic"/>
    <property type="match status" value="1"/>
</dbReference>
<dbReference type="Gene3D" id="3.30.1370.30">
    <property type="match status" value="1"/>
</dbReference>
<dbReference type="Gene3D" id="3.30.1490.10">
    <property type="match status" value="1"/>
</dbReference>
<dbReference type="HAMAP" id="MF_01302_B">
    <property type="entry name" value="Ribosomal_uS8_B"/>
    <property type="match status" value="1"/>
</dbReference>
<dbReference type="InterPro" id="IPR000630">
    <property type="entry name" value="Ribosomal_uS8"/>
</dbReference>
<dbReference type="InterPro" id="IPR047863">
    <property type="entry name" value="Ribosomal_uS8_CS"/>
</dbReference>
<dbReference type="InterPro" id="IPR035987">
    <property type="entry name" value="Ribosomal_uS8_sf"/>
</dbReference>
<dbReference type="NCBIfam" id="NF001109">
    <property type="entry name" value="PRK00136.1"/>
    <property type="match status" value="1"/>
</dbReference>
<dbReference type="PANTHER" id="PTHR11758">
    <property type="entry name" value="40S RIBOSOMAL PROTEIN S15A"/>
    <property type="match status" value="1"/>
</dbReference>
<dbReference type="Pfam" id="PF00410">
    <property type="entry name" value="Ribosomal_S8"/>
    <property type="match status" value="1"/>
</dbReference>
<dbReference type="SUPFAM" id="SSF56047">
    <property type="entry name" value="Ribosomal protein S8"/>
    <property type="match status" value="1"/>
</dbReference>
<dbReference type="PROSITE" id="PS00053">
    <property type="entry name" value="RIBOSOMAL_S8"/>
    <property type="match status" value="1"/>
</dbReference>
<feature type="chain" id="PRO_0000126585" description="Small ribosomal subunit protein uS8c">
    <location>
        <begin position="1"/>
        <end position="136"/>
    </location>
</feature>
<protein>
    <recommendedName>
        <fullName evidence="2">Small ribosomal subunit protein uS8c</fullName>
    </recommendedName>
    <alternativeName>
        <fullName>30S ribosomal protein S8, chloroplastic</fullName>
    </alternativeName>
</protein>
<geneLocation type="chloroplast"/>
<proteinExistence type="inferred from homology"/>
<comment type="function">
    <text evidence="1">One of the primary rRNA binding proteins, it binds directly to 16S rRNA central domain where it helps coordinate assembly of the platform of the 30S subunit.</text>
</comment>
<comment type="subunit">
    <text evidence="1">Part of the 30S ribosomal subunit.</text>
</comment>
<comment type="subcellular location">
    <subcellularLocation>
        <location>Plastid</location>
        <location>Chloroplast</location>
    </subcellularLocation>
</comment>
<comment type="similarity">
    <text evidence="2">Belongs to the universal ribosomal protein uS8 family.</text>
</comment>